<evidence type="ECO:0000250" key="1"/>
<evidence type="ECO:0000305" key="2"/>
<comment type="function">
    <text evidence="1">Catalyzes the removal of a penultimate prolyl residue from the N-termini of peptides.</text>
</comment>
<comment type="catalytic activity">
    <reaction>
        <text>Release of any N-terminal amino acid, including proline, that is linked to proline, even from a dipeptide or tripeptide.</text>
        <dbReference type="EC" id="3.4.11.9"/>
    </reaction>
</comment>
<comment type="cofactor">
    <cofactor evidence="1">
        <name>Mn(2+)</name>
        <dbReference type="ChEBI" id="CHEBI:29035"/>
    </cofactor>
    <text evidence="1">Binds 2 manganese ions per subunit.</text>
</comment>
<comment type="similarity">
    <text evidence="2">Belongs to the peptidase M24B family.</text>
</comment>
<gene>
    <name type="ORF">ARB_01886</name>
</gene>
<feature type="chain" id="PRO_0000411820" description="Probable Xaa-Pro aminopeptidase ARB_01886">
    <location>
        <begin position="1"/>
        <end position="507"/>
    </location>
</feature>
<feature type="binding site" evidence="1">
    <location>
        <position position="275"/>
    </location>
    <ligand>
        <name>Mn(2+)</name>
        <dbReference type="ChEBI" id="CHEBI:29035"/>
        <label>2</label>
    </ligand>
</feature>
<feature type="binding site" evidence="1">
    <location>
        <position position="286"/>
    </location>
    <ligand>
        <name>Mn(2+)</name>
        <dbReference type="ChEBI" id="CHEBI:29035"/>
        <label>1</label>
    </ligand>
</feature>
<feature type="binding site" evidence="1">
    <location>
        <position position="286"/>
    </location>
    <ligand>
        <name>Mn(2+)</name>
        <dbReference type="ChEBI" id="CHEBI:29035"/>
        <label>2</label>
    </ligand>
</feature>
<feature type="binding site" evidence="1">
    <location>
        <position position="434"/>
    </location>
    <ligand>
        <name>Mn(2+)</name>
        <dbReference type="ChEBI" id="CHEBI:29035"/>
        <label>1</label>
    </ligand>
</feature>
<feature type="binding site" evidence="1">
    <location>
        <position position="478"/>
    </location>
    <ligand>
        <name>Mn(2+)</name>
        <dbReference type="ChEBI" id="CHEBI:29035"/>
        <label>1</label>
    </ligand>
</feature>
<feature type="binding site" evidence="1">
    <location>
        <position position="478"/>
    </location>
    <ligand>
        <name>Mn(2+)</name>
        <dbReference type="ChEBI" id="CHEBI:29035"/>
        <label>2</label>
    </ligand>
</feature>
<proteinExistence type="inferred from homology"/>
<dbReference type="EC" id="3.4.11.9"/>
<dbReference type="EMBL" id="ABSU01000023">
    <property type="protein sequence ID" value="EFE31264.1"/>
    <property type="molecule type" value="Genomic_DNA"/>
</dbReference>
<dbReference type="RefSeq" id="XP_003011904.1">
    <property type="nucleotide sequence ID" value="XM_003011858.1"/>
</dbReference>
<dbReference type="SMR" id="D4B0B2"/>
<dbReference type="STRING" id="663331.D4B0B2"/>
<dbReference type="GeneID" id="9526459"/>
<dbReference type="KEGG" id="abe:ARB_01886"/>
<dbReference type="eggNOG" id="KOG2737">
    <property type="taxonomic scope" value="Eukaryota"/>
</dbReference>
<dbReference type="HOGENOM" id="CLU_017266_1_2_1"/>
<dbReference type="OMA" id="YELRMIR"/>
<dbReference type="Proteomes" id="UP000008866">
    <property type="component" value="Unassembled WGS sequence"/>
</dbReference>
<dbReference type="GO" id="GO:0030145">
    <property type="term" value="F:manganese ion binding"/>
    <property type="evidence" value="ECO:0007669"/>
    <property type="project" value="InterPro"/>
</dbReference>
<dbReference type="GO" id="GO:0070006">
    <property type="term" value="F:metalloaminopeptidase activity"/>
    <property type="evidence" value="ECO:0007669"/>
    <property type="project" value="InterPro"/>
</dbReference>
<dbReference type="GO" id="GO:0006508">
    <property type="term" value="P:proteolysis"/>
    <property type="evidence" value="ECO:0007669"/>
    <property type="project" value="UniProtKB-KW"/>
</dbReference>
<dbReference type="Gene3D" id="3.90.230.10">
    <property type="entry name" value="Creatinase/methionine aminopeptidase superfamily"/>
    <property type="match status" value="1"/>
</dbReference>
<dbReference type="Gene3D" id="3.40.350.10">
    <property type="entry name" value="Creatinase/prolidase N-terminal domain"/>
    <property type="match status" value="1"/>
</dbReference>
<dbReference type="InterPro" id="IPR007865">
    <property type="entry name" value="Aminopep_P_N"/>
</dbReference>
<dbReference type="InterPro" id="IPR029149">
    <property type="entry name" value="Creatin/AminoP/Spt16_N"/>
</dbReference>
<dbReference type="InterPro" id="IPR036005">
    <property type="entry name" value="Creatinase/aminopeptidase-like"/>
</dbReference>
<dbReference type="InterPro" id="IPR000994">
    <property type="entry name" value="Pept_M24"/>
</dbReference>
<dbReference type="InterPro" id="IPR001131">
    <property type="entry name" value="Peptidase_M24B_aminopep-P_CS"/>
</dbReference>
<dbReference type="InterPro" id="IPR052433">
    <property type="entry name" value="X-Pro_dipept-like"/>
</dbReference>
<dbReference type="PANTHER" id="PTHR43226">
    <property type="entry name" value="XAA-PRO AMINOPEPTIDASE 3"/>
    <property type="match status" value="1"/>
</dbReference>
<dbReference type="PANTHER" id="PTHR43226:SF3">
    <property type="entry name" value="XAA-PRO AMINOPEPTIDASE AN0832-RELATED"/>
    <property type="match status" value="1"/>
</dbReference>
<dbReference type="Pfam" id="PF05195">
    <property type="entry name" value="AMP_N"/>
    <property type="match status" value="1"/>
</dbReference>
<dbReference type="Pfam" id="PF00557">
    <property type="entry name" value="Peptidase_M24"/>
    <property type="match status" value="1"/>
</dbReference>
<dbReference type="SMART" id="SM01011">
    <property type="entry name" value="AMP_N"/>
    <property type="match status" value="1"/>
</dbReference>
<dbReference type="SUPFAM" id="SSF55920">
    <property type="entry name" value="Creatinase/aminopeptidase"/>
    <property type="match status" value="1"/>
</dbReference>
<dbReference type="SUPFAM" id="SSF53092">
    <property type="entry name" value="Creatinase/prolidase N-terminal domain"/>
    <property type="match status" value="1"/>
</dbReference>
<dbReference type="PROSITE" id="PS00491">
    <property type="entry name" value="PROLINE_PEPTIDASE"/>
    <property type="match status" value="1"/>
</dbReference>
<sequence>MASYSVTVSVAGTSINKYPAGSAGFDLAMADSYDPGKQHARRVAAYLPKQQGLIYLPGQQTVLSEDSDQARPFKQRRYFFYVTGVVEPDCHVTYDIAEDKLTLYVPDFDFKRTIWTGPTLGKDEASQRYDVDRVEYFSALEGDVLRWSQANPSLPIYILHPDQRPVTPLTVAYLYESKSLKHAMDACRVIKDEHEIQLIQRANRVSGAAHRSILANLHHFKNEAQIAGLFIDVCLSLRSKGTAYQTIAGSGSNGATLHYTRNNEPLAGRQMVVLDAGAEWSCYASDVTRSFPIPSSVSGGRDWPSREAEQIYAIVQRMQEECISRVKEGTLFFSIHQHAHAIALEELLKLGILRIPQGSTKADLIKAEVTALFFPHGLGHHLGLEVHDVSPDSGTIPVELAIEREKGLMSVTEHRPPCTLSAPPLASGMVITVEPGLYFNRLAIDQARAERDEPNSKGRFVNFDVVERYVDVGGVRIEDDVLVTKDGNKNLTDAPKGKEMLDLIYGR</sequence>
<accession>D4B0B2</accession>
<name>AMPP2_ARTBC</name>
<reference key="1">
    <citation type="journal article" date="2011" name="Genome Biol.">
        <title>Comparative and functional genomics provide insights into the pathogenicity of dermatophytic fungi.</title>
        <authorList>
            <person name="Burmester A."/>
            <person name="Shelest E."/>
            <person name="Gloeckner G."/>
            <person name="Heddergott C."/>
            <person name="Schindler S."/>
            <person name="Staib P."/>
            <person name="Heidel A."/>
            <person name="Felder M."/>
            <person name="Petzold A."/>
            <person name="Szafranski K."/>
            <person name="Feuermann M."/>
            <person name="Pedruzzi I."/>
            <person name="Priebe S."/>
            <person name="Groth M."/>
            <person name="Winkler R."/>
            <person name="Li W."/>
            <person name="Kniemeyer O."/>
            <person name="Schroeckh V."/>
            <person name="Hertweck C."/>
            <person name="Hube B."/>
            <person name="White T.C."/>
            <person name="Platzer M."/>
            <person name="Guthke R."/>
            <person name="Heitman J."/>
            <person name="Woestemeyer J."/>
            <person name="Zipfel P.F."/>
            <person name="Monod M."/>
            <person name="Brakhage A.A."/>
        </authorList>
    </citation>
    <scope>NUCLEOTIDE SEQUENCE [LARGE SCALE GENOMIC DNA]</scope>
    <source>
        <strain>ATCC MYA-4681 / CBS 112371</strain>
    </source>
</reference>
<keyword id="KW-0031">Aminopeptidase</keyword>
<keyword id="KW-0378">Hydrolase</keyword>
<keyword id="KW-0464">Manganese</keyword>
<keyword id="KW-0479">Metal-binding</keyword>
<keyword id="KW-0482">Metalloprotease</keyword>
<keyword id="KW-0645">Protease</keyword>
<keyword id="KW-1185">Reference proteome</keyword>
<organism>
    <name type="scientific">Arthroderma benhamiae (strain ATCC MYA-4681 / CBS 112371)</name>
    <name type="common">Trichophyton mentagrophytes</name>
    <dbReference type="NCBI Taxonomy" id="663331"/>
    <lineage>
        <taxon>Eukaryota</taxon>
        <taxon>Fungi</taxon>
        <taxon>Dikarya</taxon>
        <taxon>Ascomycota</taxon>
        <taxon>Pezizomycotina</taxon>
        <taxon>Eurotiomycetes</taxon>
        <taxon>Eurotiomycetidae</taxon>
        <taxon>Onygenales</taxon>
        <taxon>Arthrodermataceae</taxon>
        <taxon>Trichophyton</taxon>
    </lineage>
</organism>
<protein>
    <recommendedName>
        <fullName>Probable Xaa-Pro aminopeptidase ARB_01886</fullName>
        <ecNumber>3.4.11.9</ecNumber>
    </recommendedName>
    <alternativeName>
        <fullName>Aminoacylproline aminopeptidase</fullName>
    </alternativeName>
    <alternativeName>
        <fullName>Prolidase</fullName>
    </alternativeName>
</protein>